<proteinExistence type="evidence at transcript level"/>
<gene>
    <name type="primary">anapc15-b</name>
</gene>
<name>AP15B_XENLA</name>
<feature type="chain" id="PRO_0000417541" description="Anaphase-promoting complex subunit 15B">
    <location>
        <begin position="1"/>
        <end position="120"/>
    </location>
</feature>
<feature type="region of interest" description="Disordered" evidence="2">
    <location>
        <begin position="46"/>
        <end position="120"/>
    </location>
</feature>
<feature type="compositionally biased region" description="Acidic residues" evidence="2">
    <location>
        <begin position="61"/>
        <end position="120"/>
    </location>
</feature>
<comment type="function">
    <text evidence="1">Component of the anaphase promoting complex/cyclosome (APC/C), a cell cycle-regulated E3 ubiquitin ligase that controls progression through mitosis and the G1 phase of the cell cycle. The APC/C complex catalyzes assembly of branched 'Lys-11'-/'Lys-48'-linked branched ubiquitin chains on target proteins.</text>
</comment>
<comment type="pathway">
    <text evidence="1">Protein modification; protein ubiquitination.</text>
</comment>
<comment type="subunit">
    <text evidence="1">The APC/C is composed of at least 12 subunits.</text>
</comment>
<comment type="similarity">
    <text evidence="3">Belongs to the APC15 family.</text>
</comment>
<organism>
    <name type="scientific">Xenopus laevis</name>
    <name type="common">African clawed frog</name>
    <dbReference type="NCBI Taxonomy" id="8355"/>
    <lineage>
        <taxon>Eukaryota</taxon>
        <taxon>Metazoa</taxon>
        <taxon>Chordata</taxon>
        <taxon>Craniata</taxon>
        <taxon>Vertebrata</taxon>
        <taxon>Euteleostomi</taxon>
        <taxon>Amphibia</taxon>
        <taxon>Batrachia</taxon>
        <taxon>Anura</taxon>
        <taxon>Pipoidea</taxon>
        <taxon>Pipidae</taxon>
        <taxon>Xenopodinae</taxon>
        <taxon>Xenopus</taxon>
        <taxon>Xenopus</taxon>
    </lineage>
</organism>
<dbReference type="EMBL" id="BC106521">
    <property type="protein sequence ID" value="AAI06522.1"/>
    <property type="molecule type" value="mRNA"/>
</dbReference>
<dbReference type="RefSeq" id="NP_001089768.1">
    <property type="nucleotide sequence ID" value="NM_001096299.1"/>
</dbReference>
<dbReference type="RefSeq" id="XP_018122204.1">
    <property type="nucleotide sequence ID" value="XM_018266715.1"/>
</dbReference>
<dbReference type="SMR" id="Q3B8E5"/>
<dbReference type="DNASU" id="734832"/>
<dbReference type="GeneID" id="734832"/>
<dbReference type="KEGG" id="xla:734832"/>
<dbReference type="AGR" id="Xenbase:XB-GENE-6255013"/>
<dbReference type="CTD" id="734832"/>
<dbReference type="Xenbase" id="XB-GENE-6255013">
    <property type="gene designation" value="anapc15.L"/>
</dbReference>
<dbReference type="OMA" id="LWFNADR"/>
<dbReference type="OrthoDB" id="6362917at2759"/>
<dbReference type="UniPathway" id="UPA00143"/>
<dbReference type="Proteomes" id="UP000186698">
    <property type="component" value="Chromosome 6L"/>
</dbReference>
<dbReference type="Bgee" id="734832">
    <property type="expression patterns" value="Expressed in muscle tissue and 20 other cell types or tissues"/>
</dbReference>
<dbReference type="GO" id="GO:0005680">
    <property type="term" value="C:anaphase-promoting complex"/>
    <property type="evidence" value="ECO:0000250"/>
    <property type="project" value="UniProtKB"/>
</dbReference>
<dbReference type="GO" id="GO:0031145">
    <property type="term" value="P:anaphase-promoting complex-dependent catabolic process"/>
    <property type="evidence" value="ECO:0000250"/>
    <property type="project" value="UniProtKB"/>
</dbReference>
<dbReference type="GO" id="GO:0051301">
    <property type="term" value="P:cell division"/>
    <property type="evidence" value="ECO:0007669"/>
    <property type="project" value="UniProtKB-KW"/>
</dbReference>
<dbReference type="GO" id="GO:0141198">
    <property type="term" value="P:protein branched polyubiquitination"/>
    <property type="evidence" value="ECO:0000250"/>
    <property type="project" value="UniProtKB"/>
</dbReference>
<dbReference type="GO" id="GO:0070979">
    <property type="term" value="P:protein K11-linked ubiquitination"/>
    <property type="evidence" value="ECO:0000250"/>
    <property type="project" value="UniProtKB"/>
</dbReference>
<dbReference type="GO" id="GO:0070936">
    <property type="term" value="P:protein K48-linked ubiquitination"/>
    <property type="evidence" value="ECO:0000250"/>
    <property type="project" value="UniProtKB"/>
</dbReference>
<dbReference type="GO" id="GO:0090266">
    <property type="term" value="P:regulation of mitotic cell cycle spindle assembly checkpoint"/>
    <property type="evidence" value="ECO:0000250"/>
    <property type="project" value="UniProtKB"/>
</dbReference>
<dbReference type="InterPro" id="IPR026182">
    <property type="entry name" value="ANAPC15"/>
</dbReference>
<dbReference type="PANTHER" id="PTHR22526">
    <property type="entry name" value="ANAPHASE PROMOTING COMPLEX C SUBUNIT 15, PSEUDOGENE-RELATED"/>
    <property type="match status" value="1"/>
</dbReference>
<dbReference type="PANTHER" id="PTHR22526:SF2">
    <property type="entry name" value="ANAPHASE PROMOTING COMPLEX C SUBUNIT 15, PSEUDOGENE-RELATED"/>
    <property type="match status" value="1"/>
</dbReference>
<dbReference type="Pfam" id="PF15243">
    <property type="entry name" value="ANAPC15"/>
    <property type="match status" value="1"/>
</dbReference>
<keyword id="KW-0131">Cell cycle</keyword>
<keyword id="KW-0132">Cell division</keyword>
<keyword id="KW-0498">Mitosis</keyword>
<keyword id="KW-1185">Reference proteome</keyword>
<sequence>MSTLFPSLLPQVTDSLWFNLDRPCVDENELQQQEQQHQAWLLSIAEKDSSLVPIGKPASEPYDEEEEEDDEDDEDSEEDSEDDEDMQDMDEMNDYNESPDDGEIEADMEGAEQDQDQWMI</sequence>
<reference key="1">
    <citation type="submission" date="2005-10" db="EMBL/GenBank/DDBJ databases">
        <authorList>
            <consortium name="NIH - Xenopus Gene Collection (XGC) project"/>
        </authorList>
    </citation>
    <scope>NUCLEOTIDE SEQUENCE [LARGE SCALE MRNA]</scope>
    <source>
        <tissue>Testis</tissue>
    </source>
</reference>
<evidence type="ECO:0000250" key="1">
    <source>
        <dbReference type="UniProtKB" id="P60006"/>
    </source>
</evidence>
<evidence type="ECO:0000256" key="2">
    <source>
        <dbReference type="SAM" id="MobiDB-lite"/>
    </source>
</evidence>
<evidence type="ECO:0000305" key="3"/>
<accession>Q3B8E5</accession>
<protein>
    <recommendedName>
        <fullName>Anaphase-promoting complex subunit 15B</fullName>
    </recommendedName>
</protein>